<proteinExistence type="inferred from homology"/>
<gene>
    <name evidence="1" type="primary">plsY</name>
    <name type="ordered locus">CCNA_02528</name>
</gene>
<accession>B8GZK4</accession>
<evidence type="ECO:0000255" key="1">
    <source>
        <dbReference type="HAMAP-Rule" id="MF_01043"/>
    </source>
</evidence>
<protein>
    <recommendedName>
        <fullName evidence="1">Glycerol-3-phosphate acyltransferase</fullName>
    </recommendedName>
    <alternativeName>
        <fullName evidence="1">Acyl-PO4 G3P acyltransferase</fullName>
    </alternativeName>
    <alternativeName>
        <fullName evidence="1">Acyl-phosphate--glycerol-3-phosphate acyltransferase</fullName>
    </alternativeName>
    <alternativeName>
        <fullName evidence="1">G3P acyltransferase</fullName>
        <shortName evidence="1">GPAT</shortName>
        <ecNumber evidence="1">2.3.1.275</ecNumber>
    </alternativeName>
    <alternativeName>
        <fullName evidence="1">Lysophosphatidic acid synthase</fullName>
        <shortName evidence="1">LPA synthase</shortName>
    </alternativeName>
</protein>
<feature type="chain" id="PRO_1000149565" description="Glycerol-3-phosphate acyltransferase">
    <location>
        <begin position="1"/>
        <end position="218"/>
    </location>
</feature>
<feature type="transmembrane region" description="Helical" evidence="1">
    <location>
        <begin position="10"/>
        <end position="30"/>
    </location>
</feature>
<feature type="transmembrane region" description="Helical" evidence="1">
    <location>
        <begin position="60"/>
        <end position="80"/>
    </location>
</feature>
<feature type="transmembrane region" description="Helical" evidence="1">
    <location>
        <begin position="88"/>
        <end position="108"/>
    </location>
</feature>
<feature type="transmembrane region" description="Helical" evidence="1">
    <location>
        <begin position="125"/>
        <end position="145"/>
    </location>
</feature>
<feature type="transmembrane region" description="Helical" evidence="1">
    <location>
        <begin position="165"/>
        <end position="185"/>
    </location>
</feature>
<comment type="function">
    <text evidence="1">Catalyzes the transfer of an acyl group from acyl-phosphate (acyl-PO(4)) to glycerol-3-phosphate (G3P) to form lysophosphatidic acid (LPA). This enzyme utilizes acyl-phosphate as fatty acyl donor, but not acyl-CoA or acyl-ACP.</text>
</comment>
<comment type="catalytic activity">
    <reaction evidence="1">
        <text>an acyl phosphate + sn-glycerol 3-phosphate = a 1-acyl-sn-glycero-3-phosphate + phosphate</text>
        <dbReference type="Rhea" id="RHEA:34075"/>
        <dbReference type="ChEBI" id="CHEBI:43474"/>
        <dbReference type="ChEBI" id="CHEBI:57597"/>
        <dbReference type="ChEBI" id="CHEBI:57970"/>
        <dbReference type="ChEBI" id="CHEBI:59918"/>
        <dbReference type="EC" id="2.3.1.275"/>
    </reaction>
</comment>
<comment type="pathway">
    <text evidence="1">Lipid metabolism; phospholipid metabolism.</text>
</comment>
<comment type="subunit">
    <text evidence="1">Probably interacts with PlsX.</text>
</comment>
<comment type="subcellular location">
    <subcellularLocation>
        <location evidence="1">Cell inner membrane</location>
        <topology evidence="1">Multi-pass membrane protein</topology>
    </subcellularLocation>
</comment>
<comment type="similarity">
    <text evidence="1">Belongs to the PlsY family.</text>
</comment>
<organism>
    <name type="scientific">Caulobacter vibrioides (strain NA1000 / CB15N)</name>
    <name type="common">Caulobacter crescentus</name>
    <dbReference type="NCBI Taxonomy" id="565050"/>
    <lineage>
        <taxon>Bacteria</taxon>
        <taxon>Pseudomonadati</taxon>
        <taxon>Pseudomonadota</taxon>
        <taxon>Alphaproteobacteria</taxon>
        <taxon>Caulobacterales</taxon>
        <taxon>Caulobacteraceae</taxon>
        <taxon>Caulobacter</taxon>
    </lineage>
</organism>
<sequence>MQDLAAIAYLTLGIAIVGGYLLGSIPFGLIATRLGGAGDIRQIGSGNIGATNVLRSGRKDLAAITLLGDAGKGVVAVLLARYLTNGNPAIIALAGGSAFLGHLFPVWLKFKGGKGVATFYGVLLSAAWPVGVAAGATWLAMAFLFRISSLAALTAAVLAAPFALAFDQPYPFMGLCLFMAVLIFIRHRENIARLLKGEEPKIGKKKPAEEAPPAPDAP</sequence>
<reference key="1">
    <citation type="journal article" date="2010" name="J. Bacteriol.">
        <title>The genetic basis of laboratory adaptation in Caulobacter crescentus.</title>
        <authorList>
            <person name="Marks M.E."/>
            <person name="Castro-Rojas C.M."/>
            <person name="Teiling C."/>
            <person name="Du L."/>
            <person name="Kapatral V."/>
            <person name="Walunas T.L."/>
            <person name="Crosson S."/>
        </authorList>
    </citation>
    <scope>NUCLEOTIDE SEQUENCE [LARGE SCALE GENOMIC DNA]</scope>
    <source>
        <strain>NA1000 / CB15N</strain>
    </source>
</reference>
<keyword id="KW-0997">Cell inner membrane</keyword>
<keyword id="KW-1003">Cell membrane</keyword>
<keyword id="KW-0444">Lipid biosynthesis</keyword>
<keyword id="KW-0443">Lipid metabolism</keyword>
<keyword id="KW-0472">Membrane</keyword>
<keyword id="KW-0594">Phospholipid biosynthesis</keyword>
<keyword id="KW-1208">Phospholipid metabolism</keyword>
<keyword id="KW-1185">Reference proteome</keyword>
<keyword id="KW-0808">Transferase</keyword>
<keyword id="KW-0812">Transmembrane</keyword>
<keyword id="KW-1133">Transmembrane helix</keyword>
<dbReference type="EC" id="2.3.1.275" evidence="1"/>
<dbReference type="EMBL" id="CP001340">
    <property type="protein sequence ID" value="ACL95993.1"/>
    <property type="molecule type" value="Genomic_DNA"/>
</dbReference>
<dbReference type="RefSeq" id="WP_010920304.1">
    <property type="nucleotide sequence ID" value="NC_011916.1"/>
</dbReference>
<dbReference type="RefSeq" id="YP_002517901.1">
    <property type="nucleotide sequence ID" value="NC_011916.1"/>
</dbReference>
<dbReference type="SMR" id="B8GZK4"/>
<dbReference type="GeneID" id="7330681"/>
<dbReference type="KEGG" id="ccs:CCNA_02528"/>
<dbReference type="PATRIC" id="fig|565050.3.peg.2481"/>
<dbReference type="HOGENOM" id="CLU_081254_1_0_5"/>
<dbReference type="OrthoDB" id="9777124at2"/>
<dbReference type="PhylomeDB" id="B8GZK4"/>
<dbReference type="UniPathway" id="UPA00085"/>
<dbReference type="Proteomes" id="UP000001364">
    <property type="component" value="Chromosome"/>
</dbReference>
<dbReference type="GO" id="GO:0005886">
    <property type="term" value="C:plasma membrane"/>
    <property type="evidence" value="ECO:0007669"/>
    <property type="project" value="UniProtKB-SubCell"/>
</dbReference>
<dbReference type="GO" id="GO:0043772">
    <property type="term" value="F:acyl-phosphate glycerol-3-phosphate acyltransferase activity"/>
    <property type="evidence" value="ECO:0007669"/>
    <property type="project" value="UniProtKB-UniRule"/>
</dbReference>
<dbReference type="GO" id="GO:0008654">
    <property type="term" value="P:phospholipid biosynthetic process"/>
    <property type="evidence" value="ECO:0007669"/>
    <property type="project" value="UniProtKB-UniRule"/>
</dbReference>
<dbReference type="HAMAP" id="MF_01043">
    <property type="entry name" value="PlsY"/>
    <property type="match status" value="1"/>
</dbReference>
<dbReference type="InterPro" id="IPR003811">
    <property type="entry name" value="G3P_acylTferase_PlsY"/>
</dbReference>
<dbReference type="NCBIfam" id="TIGR00023">
    <property type="entry name" value="glycerol-3-phosphate 1-O-acyltransferase PlsY"/>
    <property type="match status" value="1"/>
</dbReference>
<dbReference type="PANTHER" id="PTHR30309:SF0">
    <property type="entry name" value="GLYCEROL-3-PHOSPHATE ACYLTRANSFERASE-RELATED"/>
    <property type="match status" value="1"/>
</dbReference>
<dbReference type="PANTHER" id="PTHR30309">
    <property type="entry name" value="INNER MEMBRANE PROTEIN YGIH"/>
    <property type="match status" value="1"/>
</dbReference>
<dbReference type="Pfam" id="PF02660">
    <property type="entry name" value="G3P_acyltransf"/>
    <property type="match status" value="1"/>
</dbReference>
<dbReference type="SMART" id="SM01207">
    <property type="entry name" value="G3P_acyltransf"/>
    <property type="match status" value="1"/>
</dbReference>
<name>PLSY_CAUVN</name>